<dbReference type="EMBL" id="CP000725">
    <property type="protein sequence ID" value="ABV10976.1"/>
    <property type="molecule type" value="Genomic_DNA"/>
</dbReference>
<dbReference type="RefSeq" id="WP_012000594.1">
    <property type="nucleotide sequence ID" value="NC_009785.1"/>
</dbReference>
<dbReference type="SMR" id="A8AXG9"/>
<dbReference type="STRING" id="467705.SGO_1192"/>
<dbReference type="KEGG" id="sgo:SGO_1192"/>
<dbReference type="eggNOG" id="COG0244">
    <property type="taxonomic scope" value="Bacteria"/>
</dbReference>
<dbReference type="HOGENOM" id="CLU_092227_2_0_9"/>
<dbReference type="Proteomes" id="UP000001131">
    <property type="component" value="Chromosome"/>
</dbReference>
<dbReference type="GO" id="GO:0015934">
    <property type="term" value="C:large ribosomal subunit"/>
    <property type="evidence" value="ECO:0007669"/>
    <property type="project" value="InterPro"/>
</dbReference>
<dbReference type="GO" id="GO:0070180">
    <property type="term" value="F:large ribosomal subunit rRNA binding"/>
    <property type="evidence" value="ECO:0007669"/>
    <property type="project" value="UniProtKB-UniRule"/>
</dbReference>
<dbReference type="GO" id="GO:0003735">
    <property type="term" value="F:structural constituent of ribosome"/>
    <property type="evidence" value="ECO:0007669"/>
    <property type="project" value="InterPro"/>
</dbReference>
<dbReference type="GO" id="GO:0006412">
    <property type="term" value="P:translation"/>
    <property type="evidence" value="ECO:0007669"/>
    <property type="project" value="UniProtKB-UniRule"/>
</dbReference>
<dbReference type="CDD" id="cd05797">
    <property type="entry name" value="Ribosomal_L10"/>
    <property type="match status" value="1"/>
</dbReference>
<dbReference type="FunFam" id="3.30.70.1730:FF:000001">
    <property type="entry name" value="50S ribosomal protein L10"/>
    <property type="match status" value="1"/>
</dbReference>
<dbReference type="Gene3D" id="3.30.70.1730">
    <property type="match status" value="1"/>
</dbReference>
<dbReference type="HAMAP" id="MF_00362">
    <property type="entry name" value="Ribosomal_uL10"/>
    <property type="match status" value="1"/>
</dbReference>
<dbReference type="InterPro" id="IPR001790">
    <property type="entry name" value="Ribosomal_uL10"/>
</dbReference>
<dbReference type="InterPro" id="IPR043141">
    <property type="entry name" value="Ribosomal_uL10-like_sf"/>
</dbReference>
<dbReference type="InterPro" id="IPR022973">
    <property type="entry name" value="Ribosomal_uL10_bac"/>
</dbReference>
<dbReference type="InterPro" id="IPR047865">
    <property type="entry name" value="Ribosomal_uL10_bac_type"/>
</dbReference>
<dbReference type="InterPro" id="IPR002363">
    <property type="entry name" value="Ribosomal_uL10_CS_bac"/>
</dbReference>
<dbReference type="NCBIfam" id="NF000955">
    <property type="entry name" value="PRK00099.1-1"/>
    <property type="match status" value="1"/>
</dbReference>
<dbReference type="PANTHER" id="PTHR11560">
    <property type="entry name" value="39S RIBOSOMAL PROTEIN L10, MITOCHONDRIAL"/>
    <property type="match status" value="1"/>
</dbReference>
<dbReference type="Pfam" id="PF00466">
    <property type="entry name" value="Ribosomal_L10"/>
    <property type="match status" value="1"/>
</dbReference>
<dbReference type="SUPFAM" id="SSF160369">
    <property type="entry name" value="Ribosomal protein L10-like"/>
    <property type="match status" value="1"/>
</dbReference>
<dbReference type="PROSITE" id="PS01109">
    <property type="entry name" value="RIBOSOMAL_L10"/>
    <property type="match status" value="1"/>
</dbReference>
<reference key="1">
    <citation type="journal article" date="2007" name="J. Bacteriol.">
        <title>Genome-wide transcriptional changes in Streptococcus gordonii in response to competence signaling peptide.</title>
        <authorList>
            <person name="Vickerman M.M."/>
            <person name="Iobst S."/>
            <person name="Jesionowski A.M."/>
            <person name="Gill S.R."/>
        </authorList>
    </citation>
    <scope>NUCLEOTIDE SEQUENCE [LARGE SCALE GENOMIC DNA]</scope>
    <source>
        <strain>Challis / ATCC 35105 / BCRC 15272 / CH1 / DL1 / V288</strain>
    </source>
</reference>
<sequence length="166" mass="17462">MSEAIIAKKAELVDVVAEKMKAAASIVVVDARGLTVEQDTVLRRELRGSEVEYKVIKNSILRRAAEKAGLEDLASVFVGPSAVAFSNEDVIAPAKILNDFAKNADALEIKGGAIEGAVASKEEILALATLPNREGLLSMLLSVLQAPVRNVALAVKAVADNKEDAA</sequence>
<comment type="function">
    <text evidence="1">Forms part of the ribosomal stalk, playing a central role in the interaction of the ribosome with GTP-bound translation factors.</text>
</comment>
<comment type="subunit">
    <text evidence="1">Part of the ribosomal stalk of the 50S ribosomal subunit. The N-terminus interacts with L11 and the large rRNA to form the base of the stalk. The C-terminus forms an elongated spine to which L12 dimers bind in a sequential fashion forming a multimeric L10(L12)X complex.</text>
</comment>
<comment type="similarity">
    <text evidence="1">Belongs to the universal ribosomal protein uL10 family.</text>
</comment>
<evidence type="ECO:0000255" key="1">
    <source>
        <dbReference type="HAMAP-Rule" id="MF_00362"/>
    </source>
</evidence>
<evidence type="ECO:0000305" key="2"/>
<keyword id="KW-1185">Reference proteome</keyword>
<keyword id="KW-0687">Ribonucleoprotein</keyword>
<keyword id="KW-0689">Ribosomal protein</keyword>
<keyword id="KW-0694">RNA-binding</keyword>
<keyword id="KW-0699">rRNA-binding</keyword>
<name>RL10_STRGC</name>
<proteinExistence type="inferred from homology"/>
<organism>
    <name type="scientific">Streptococcus gordonii (strain Challis / ATCC 35105 / BCRC 15272 / CH1 / DL1 / V288)</name>
    <dbReference type="NCBI Taxonomy" id="467705"/>
    <lineage>
        <taxon>Bacteria</taxon>
        <taxon>Bacillati</taxon>
        <taxon>Bacillota</taxon>
        <taxon>Bacilli</taxon>
        <taxon>Lactobacillales</taxon>
        <taxon>Streptococcaceae</taxon>
        <taxon>Streptococcus</taxon>
    </lineage>
</organism>
<gene>
    <name evidence="1" type="primary">rplJ</name>
    <name type="ordered locus">SGO_1192</name>
</gene>
<feature type="chain" id="PRO_1000079568" description="Large ribosomal subunit protein uL10">
    <location>
        <begin position="1"/>
        <end position="166"/>
    </location>
</feature>
<protein>
    <recommendedName>
        <fullName evidence="1">Large ribosomal subunit protein uL10</fullName>
    </recommendedName>
    <alternativeName>
        <fullName evidence="2">50S ribosomal protein L10</fullName>
    </alternativeName>
</protein>
<accession>A8AXG9</accession>